<proteinExistence type="inferred from homology"/>
<accession>A2C5S6</accession>
<gene>
    <name evidence="1" type="primary">uvrB</name>
    <name type="ordered locus">P9303_00791</name>
</gene>
<keyword id="KW-0067">ATP-binding</keyword>
<keyword id="KW-0963">Cytoplasm</keyword>
<keyword id="KW-0227">DNA damage</keyword>
<keyword id="KW-0228">DNA excision</keyword>
<keyword id="KW-0234">DNA repair</keyword>
<keyword id="KW-0267">Excision nuclease</keyword>
<keyword id="KW-0347">Helicase</keyword>
<keyword id="KW-0378">Hydrolase</keyword>
<keyword id="KW-0547">Nucleotide-binding</keyword>
<keyword id="KW-0742">SOS response</keyword>
<protein>
    <recommendedName>
        <fullName evidence="1">UvrABC system protein B</fullName>
        <shortName evidence="1">Protein UvrB</shortName>
    </recommendedName>
    <alternativeName>
        <fullName evidence="1">Excinuclease ABC subunit B</fullName>
    </alternativeName>
</protein>
<organism>
    <name type="scientific">Prochlorococcus marinus (strain MIT 9303)</name>
    <dbReference type="NCBI Taxonomy" id="59922"/>
    <lineage>
        <taxon>Bacteria</taxon>
        <taxon>Bacillati</taxon>
        <taxon>Cyanobacteriota</taxon>
        <taxon>Cyanophyceae</taxon>
        <taxon>Synechococcales</taxon>
        <taxon>Prochlorococcaceae</taxon>
        <taxon>Prochlorococcus</taxon>
    </lineage>
</organism>
<sequence>MPKYHLKAPYSPKGDQPTAIARLVEGVNQGQRYQTLLGATGTGKTFTIANLIAQTGRPALVLAHNKTLAAQLCNEFREFFPDNSVEYFISYYDYYQPEAYVPVSDTYIAKTASINEEIDMLRHSATRSLFERNDVIVVASISCIYGLGIPSEYLKAAVKFKVGETLNLRSSLRELVDNQYSRNDFDITRGRFRVRGDVLEIGPAYEDRLVRIELFGDEVEAIRYLDPTTGEILQSLEAINIYPAKHFVTPKERLNVAVQAIRDELRERLQVLNEQGKLLEAQRLEQRTAYDLEMLREVGYCNGVENYARHLAGRSAGTPPECLIDYFPDDWLLVVDESHVTCSQLKAMYNGDQARKKVLIEHGFRLPSAADNRPLKSEEFWRKARQTVFVSATPGDWELTQSDGQLAEQVIRPTGVLDPLVEVRPTQGQVDDLLAEIRIRAKKQERVLITTLTKRMAEDLTDYLAENDVRVRYLHSEIHSIERIEIIQDLRLGEYDVLVGVNLLREGLDLPEVSLVVILDADKEGFLRAERSLIQTIGRAARHVDGMALLYADNLTDSMARAISETERRREIQKAYNELNGIVPRPAGKRASNSILSFLELSRRLQTDGKDADLVQITGRAVDALDSDQDSGLALDALPELIDQLETKMKEAAKNLNFEEAASLRDRIKKFRQKLIRNT</sequence>
<dbReference type="EMBL" id="CP000554">
    <property type="protein sequence ID" value="ABM76836.1"/>
    <property type="molecule type" value="Genomic_DNA"/>
</dbReference>
<dbReference type="RefSeq" id="WP_011824768.1">
    <property type="nucleotide sequence ID" value="NC_008820.1"/>
</dbReference>
<dbReference type="SMR" id="A2C5S6"/>
<dbReference type="STRING" id="59922.P9303_00791"/>
<dbReference type="KEGG" id="pmf:P9303_00791"/>
<dbReference type="HOGENOM" id="CLU_009621_2_1_3"/>
<dbReference type="BioCyc" id="PMAR59922:G1G80-76-MONOMER"/>
<dbReference type="Proteomes" id="UP000002274">
    <property type="component" value="Chromosome"/>
</dbReference>
<dbReference type="GO" id="GO:0005737">
    <property type="term" value="C:cytoplasm"/>
    <property type="evidence" value="ECO:0007669"/>
    <property type="project" value="UniProtKB-SubCell"/>
</dbReference>
<dbReference type="GO" id="GO:0009380">
    <property type="term" value="C:excinuclease repair complex"/>
    <property type="evidence" value="ECO:0007669"/>
    <property type="project" value="InterPro"/>
</dbReference>
<dbReference type="GO" id="GO:0005524">
    <property type="term" value="F:ATP binding"/>
    <property type="evidence" value="ECO:0007669"/>
    <property type="project" value="UniProtKB-UniRule"/>
</dbReference>
<dbReference type="GO" id="GO:0016887">
    <property type="term" value="F:ATP hydrolysis activity"/>
    <property type="evidence" value="ECO:0007669"/>
    <property type="project" value="InterPro"/>
</dbReference>
<dbReference type="GO" id="GO:0003677">
    <property type="term" value="F:DNA binding"/>
    <property type="evidence" value="ECO:0007669"/>
    <property type="project" value="UniProtKB-UniRule"/>
</dbReference>
<dbReference type="GO" id="GO:0009381">
    <property type="term" value="F:excinuclease ABC activity"/>
    <property type="evidence" value="ECO:0007669"/>
    <property type="project" value="UniProtKB-UniRule"/>
</dbReference>
<dbReference type="GO" id="GO:0004386">
    <property type="term" value="F:helicase activity"/>
    <property type="evidence" value="ECO:0007669"/>
    <property type="project" value="UniProtKB-KW"/>
</dbReference>
<dbReference type="GO" id="GO:0006289">
    <property type="term" value="P:nucleotide-excision repair"/>
    <property type="evidence" value="ECO:0007669"/>
    <property type="project" value="UniProtKB-UniRule"/>
</dbReference>
<dbReference type="GO" id="GO:0009432">
    <property type="term" value="P:SOS response"/>
    <property type="evidence" value="ECO:0007669"/>
    <property type="project" value="UniProtKB-UniRule"/>
</dbReference>
<dbReference type="CDD" id="cd17916">
    <property type="entry name" value="DEXHc_UvrB"/>
    <property type="match status" value="1"/>
</dbReference>
<dbReference type="CDD" id="cd18790">
    <property type="entry name" value="SF2_C_UvrB"/>
    <property type="match status" value="1"/>
</dbReference>
<dbReference type="Gene3D" id="3.40.50.300">
    <property type="entry name" value="P-loop containing nucleotide triphosphate hydrolases"/>
    <property type="match status" value="3"/>
</dbReference>
<dbReference type="Gene3D" id="4.10.860.10">
    <property type="entry name" value="UVR domain"/>
    <property type="match status" value="1"/>
</dbReference>
<dbReference type="HAMAP" id="MF_00204">
    <property type="entry name" value="UvrB"/>
    <property type="match status" value="1"/>
</dbReference>
<dbReference type="InterPro" id="IPR006935">
    <property type="entry name" value="Helicase/UvrB_N"/>
</dbReference>
<dbReference type="InterPro" id="IPR014001">
    <property type="entry name" value="Helicase_ATP-bd"/>
</dbReference>
<dbReference type="InterPro" id="IPR001650">
    <property type="entry name" value="Helicase_C-like"/>
</dbReference>
<dbReference type="InterPro" id="IPR027417">
    <property type="entry name" value="P-loop_NTPase"/>
</dbReference>
<dbReference type="InterPro" id="IPR001943">
    <property type="entry name" value="UVR_dom"/>
</dbReference>
<dbReference type="InterPro" id="IPR036876">
    <property type="entry name" value="UVR_dom_sf"/>
</dbReference>
<dbReference type="InterPro" id="IPR004807">
    <property type="entry name" value="UvrB"/>
</dbReference>
<dbReference type="InterPro" id="IPR041471">
    <property type="entry name" value="UvrB_inter"/>
</dbReference>
<dbReference type="InterPro" id="IPR024759">
    <property type="entry name" value="UvrB_YAD/RRR_dom"/>
</dbReference>
<dbReference type="NCBIfam" id="NF003673">
    <property type="entry name" value="PRK05298.1"/>
    <property type="match status" value="1"/>
</dbReference>
<dbReference type="NCBIfam" id="TIGR00631">
    <property type="entry name" value="uvrb"/>
    <property type="match status" value="1"/>
</dbReference>
<dbReference type="PANTHER" id="PTHR24029">
    <property type="entry name" value="UVRABC SYSTEM PROTEIN B"/>
    <property type="match status" value="1"/>
</dbReference>
<dbReference type="PANTHER" id="PTHR24029:SF0">
    <property type="entry name" value="UVRABC SYSTEM PROTEIN B"/>
    <property type="match status" value="1"/>
</dbReference>
<dbReference type="Pfam" id="PF00271">
    <property type="entry name" value="Helicase_C"/>
    <property type="match status" value="1"/>
</dbReference>
<dbReference type="Pfam" id="PF04851">
    <property type="entry name" value="ResIII"/>
    <property type="match status" value="1"/>
</dbReference>
<dbReference type="Pfam" id="PF02151">
    <property type="entry name" value="UVR"/>
    <property type="match status" value="1"/>
</dbReference>
<dbReference type="Pfam" id="PF12344">
    <property type="entry name" value="UvrB"/>
    <property type="match status" value="1"/>
</dbReference>
<dbReference type="Pfam" id="PF17757">
    <property type="entry name" value="UvrB_inter"/>
    <property type="match status" value="1"/>
</dbReference>
<dbReference type="SMART" id="SM00487">
    <property type="entry name" value="DEXDc"/>
    <property type="match status" value="1"/>
</dbReference>
<dbReference type="SMART" id="SM00490">
    <property type="entry name" value="HELICc"/>
    <property type="match status" value="1"/>
</dbReference>
<dbReference type="SUPFAM" id="SSF46600">
    <property type="entry name" value="C-terminal UvrC-binding domain of UvrB"/>
    <property type="match status" value="1"/>
</dbReference>
<dbReference type="SUPFAM" id="SSF52540">
    <property type="entry name" value="P-loop containing nucleoside triphosphate hydrolases"/>
    <property type="match status" value="2"/>
</dbReference>
<dbReference type="PROSITE" id="PS51192">
    <property type="entry name" value="HELICASE_ATP_BIND_1"/>
    <property type="match status" value="1"/>
</dbReference>
<dbReference type="PROSITE" id="PS51194">
    <property type="entry name" value="HELICASE_CTER"/>
    <property type="match status" value="1"/>
</dbReference>
<dbReference type="PROSITE" id="PS50151">
    <property type="entry name" value="UVR"/>
    <property type="match status" value="1"/>
</dbReference>
<name>UVRB_PROM3</name>
<evidence type="ECO:0000255" key="1">
    <source>
        <dbReference type="HAMAP-Rule" id="MF_00204"/>
    </source>
</evidence>
<reference key="1">
    <citation type="journal article" date="2007" name="PLoS Genet.">
        <title>Patterns and implications of gene gain and loss in the evolution of Prochlorococcus.</title>
        <authorList>
            <person name="Kettler G.C."/>
            <person name="Martiny A.C."/>
            <person name="Huang K."/>
            <person name="Zucker J."/>
            <person name="Coleman M.L."/>
            <person name="Rodrigue S."/>
            <person name="Chen F."/>
            <person name="Lapidus A."/>
            <person name="Ferriera S."/>
            <person name="Johnson J."/>
            <person name="Steglich C."/>
            <person name="Church G.M."/>
            <person name="Richardson P."/>
            <person name="Chisholm S.W."/>
        </authorList>
    </citation>
    <scope>NUCLEOTIDE SEQUENCE [LARGE SCALE GENOMIC DNA]</scope>
    <source>
        <strain>MIT 9303</strain>
    </source>
</reference>
<comment type="function">
    <text evidence="1">The UvrABC repair system catalyzes the recognition and processing of DNA lesions. A damage recognition complex composed of 2 UvrA and 2 UvrB subunits scans DNA for abnormalities. Upon binding of the UvrA(2)B(2) complex to a putative damaged site, the DNA wraps around one UvrB monomer. DNA wrap is dependent on ATP binding by UvrB and probably causes local melting of the DNA helix, facilitating insertion of UvrB beta-hairpin between the DNA strands. Then UvrB probes one DNA strand for the presence of a lesion. If a lesion is found the UvrA subunits dissociate and the UvrB-DNA preincision complex is formed. This complex is subsequently bound by UvrC and the second UvrB is released. If no lesion is found, the DNA wraps around the other UvrB subunit that will check the other stand for damage.</text>
</comment>
<comment type="subunit">
    <text evidence="1">Forms a heterotetramer with UvrA during the search for lesions. Interacts with UvrC in an incision complex.</text>
</comment>
<comment type="subcellular location">
    <subcellularLocation>
        <location evidence="1">Cytoplasm</location>
    </subcellularLocation>
</comment>
<comment type="domain">
    <text evidence="1">The beta-hairpin motif is involved in DNA binding.</text>
</comment>
<comment type="similarity">
    <text evidence="1">Belongs to the UvrB family.</text>
</comment>
<feature type="chain" id="PRO_1000077910" description="UvrABC system protein B">
    <location>
        <begin position="1"/>
        <end position="679"/>
    </location>
</feature>
<feature type="domain" description="Helicase ATP-binding" evidence="1">
    <location>
        <begin position="25"/>
        <end position="190"/>
    </location>
</feature>
<feature type="domain" description="Helicase C-terminal" evidence="1">
    <location>
        <begin position="429"/>
        <end position="591"/>
    </location>
</feature>
<feature type="domain" description="UVR" evidence="1">
    <location>
        <begin position="639"/>
        <end position="674"/>
    </location>
</feature>
<feature type="short sequence motif" description="Beta-hairpin">
    <location>
        <begin position="91"/>
        <end position="114"/>
    </location>
</feature>
<feature type="binding site" evidence="1">
    <location>
        <begin position="38"/>
        <end position="45"/>
    </location>
    <ligand>
        <name>ATP</name>
        <dbReference type="ChEBI" id="CHEBI:30616"/>
    </ligand>
</feature>